<protein>
    <recommendedName>
        <fullName evidence="1">Large ribosomal subunit protein bL19</fullName>
    </recommendedName>
    <alternativeName>
        <fullName evidence="2">50S ribosomal protein L19</fullName>
    </alternativeName>
</protein>
<feature type="chain" id="PRO_1000060802" description="Large ribosomal subunit protein bL19">
    <location>
        <begin position="1"/>
        <end position="115"/>
    </location>
</feature>
<keyword id="KW-0687">Ribonucleoprotein</keyword>
<keyword id="KW-0689">Ribosomal protein</keyword>
<proteinExistence type="inferred from homology"/>
<sequence>MSNIIKQLEQEQMKQDVPSFRPGDTVEVKVWVVEGSKKRLQAFEGVVIAIRNRGLHSAFTVRKISNGEGVERVFQTHSPVVDSISVKRRGAVRKAKLYYLRERTGKAARIKERLN</sequence>
<name>RL19_ECOHS</name>
<gene>
    <name evidence="1" type="primary">rplS</name>
    <name type="ordered locus">EcHS_A2765</name>
</gene>
<accession>A8A3B3</accession>
<dbReference type="EMBL" id="CP000802">
    <property type="protein sequence ID" value="ABV07017.1"/>
    <property type="molecule type" value="Genomic_DNA"/>
</dbReference>
<dbReference type="RefSeq" id="WP_000065253.1">
    <property type="nucleotide sequence ID" value="NC_009800.1"/>
</dbReference>
<dbReference type="SMR" id="A8A3B3"/>
<dbReference type="GeneID" id="93774456"/>
<dbReference type="KEGG" id="ecx:EcHS_A2765"/>
<dbReference type="HOGENOM" id="CLU_103507_2_1_6"/>
<dbReference type="GO" id="GO:0022625">
    <property type="term" value="C:cytosolic large ribosomal subunit"/>
    <property type="evidence" value="ECO:0007669"/>
    <property type="project" value="TreeGrafter"/>
</dbReference>
<dbReference type="GO" id="GO:0003735">
    <property type="term" value="F:structural constituent of ribosome"/>
    <property type="evidence" value="ECO:0007669"/>
    <property type="project" value="InterPro"/>
</dbReference>
<dbReference type="GO" id="GO:0006412">
    <property type="term" value="P:translation"/>
    <property type="evidence" value="ECO:0007669"/>
    <property type="project" value="UniProtKB-UniRule"/>
</dbReference>
<dbReference type="FunFam" id="2.30.30.790:FF:000001">
    <property type="entry name" value="50S ribosomal protein L19"/>
    <property type="match status" value="1"/>
</dbReference>
<dbReference type="Gene3D" id="2.30.30.790">
    <property type="match status" value="1"/>
</dbReference>
<dbReference type="HAMAP" id="MF_00402">
    <property type="entry name" value="Ribosomal_bL19"/>
    <property type="match status" value="1"/>
</dbReference>
<dbReference type="InterPro" id="IPR001857">
    <property type="entry name" value="Ribosomal_bL19"/>
</dbReference>
<dbReference type="InterPro" id="IPR018257">
    <property type="entry name" value="Ribosomal_bL19_CS"/>
</dbReference>
<dbReference type="InterPro" id="IPR038657">
    <property type="entry name" value="Ribosomal_bL19_sf"/>
</dbReference>
<dbReference type="InterPro" id="IPR008991">
    <property type="entry name" value="Translation_prot_SH3-like_sf"/>
</dbReference>
<dbReference type="NCBIfam" id="TIGR01024">
    <property type="entry name" value="rplS_bact"/>
    <property type="match status" value="1"/>
</dbReference>
<dbReference type="PANTHER" id="PTHR15680:SF9">
    <property type="entry name" value="LARGE RIBOSOMAL SUBUNIT PROTEIN BL19M"/>
    <property type="match status" value="1"/>
</dbReference>
<dbReference type="PANTHER" id="PTHR15680">
    <property type="entry name" value="RIBOSOMAL PROTEIN L19"/>
    <property type="match status" value="1"/>
</dbReference>
<dbReference type="Pfam" id="PF01245">
    <property type="entry name" value="Ribosomal_L19"/>
    <property type="match status" value="1"/>
</dbReference>
<dbReference type="PIRSF" id="PIRSF002191">
    <property type="entry name" value="Ribosomal_L19"/>
    <property type="match status" value="1"/>
</dbReference>
<dbReference type="PRINTS" id="PR00061">
    <property type="entry name" value="RIBOSOMALL19"/>
</dbReference>
<dbReference type="SUPFAM" id="SSF50104">
    <property type="entry name" value="Translation proteins SH3-like domain"/>
    <property type="match status" value="1"/>
</dbReference>
<dbReference type="PROSITE" id="PS01015">
    <property type="entry name" value="RIBOSOMAL_L19"/>
    <property type="match status" value="1"/>
</dbReference>
<evidence type="ECO:0000255" key="1">
    <source>
        <dbReference type="HAMAP-Rule" id="MF_00402"/>
    </source>
</evidence>
<evidence type="ECO:0000305" key="2"/>
<organism>
    <name type="scientific">Escherichia coli O9:H4 (strain HS)</name>
    <dbReference type="NCBI Taxonomy" id="331112"/>
    <lineage>
        <taxon>Bacteria</taxon>
        <taxon>Pseudomonadati</taxon>
        <taxon>Pseudomonadota</taxon>
        <taxon>Gammaproteobacteria</taxon>
        <taxon>Enterobacterales</taxon>
        <taxon>Enterobacteriaceae</taxon>
        <taxon>Escherichia</taxon>
    </lineage>
</organism>
<reference key="1">
    <citation type="journal article" date="2008" name="J. Bacteriol.">
        <title>The pangenome structure of Escherichia coli: comparative genomic analysis of E. coli commensal and pathogenic isolates.</title>
        <authorList>
            <person name="Rasko D.A."/>
            <person name="Rosovitz M.J."/>
            <person name="Myers G.S.A."/>
            <person name="Mongodin E.F."/>
            <person name="Fricke W.F."/>
            <person name="Gajer P."/>
            <person name="Crabtree J."/>
            <person name="Sebaihia M."/>
            <person name="Thomson N.R."/>
            <person name="Chaudhuri R."/>
            <person name="Henderson I.R."/>
            <person name="Sperandio V."/>
            <person name="Ravel J."/>
        </authorList>
    </citation>
    <scope>NUCLEOTIDE SEQUENCE [LARGE SCALE GENOMIC DNA]</scope>
    <source>
        <strain>HS</strain>
    </source>
</reference>
<comment type="function">
    <text evidence="1">This protein is located at the 30S-50S ribosomal subunit interface and may play a role in the structure and function of the aminoacyl-tRNA binding site.</text>
</comment>
<comment type="similarity">
    <text evidence="1">Belongs to the bacterial ribosomal protein bL19 family.</text>
</comment>